<reference key="1">
    <citation type="journal article" date="2005" name="J. Gen. Virol.">
        <title>A novel class of herpesvirus with bivalve hosts.</title>
        <authorList>
            <person name="Davison A.J."/>
            <person name="Trus B.L."/>
            <person name="Cheng N."/>
            <person name="Steven A.C."/>
            <person name="Watson M.S."/>
            <person name="Cunningham C."/>
            <person name="Le Deuff R.M."/>
            <person name="Renault T."/>
        </authorList>
    </citation>
    <scope>NUCLEOTIDE SEQUENCE [LARGE SCALE GENOMIC DNA]</scope>
</reference>
<sequence length="494" mass="57226">MLSLNQLTEVMKVANKKREKFREMEHRFYHCCKKCSQAIGVFEENQETYKVVAMMCLDQVGIPVKTDTEKESTMLEFIRFFDNPRAAIKIPDRIVELTKEHMDDKEFLIDAVHNGRVKHSTVEMTKKKKADLLEVLMDPGKNNKKEDGDDPTLFFSINDMDQLLEGDDIIDMEEECEGDEDDVNAKGYDDLYDKKQKELYKKIETGMITVVRLHEMCNDLGIGDYFELILSATEFPCVICDLSILYEFRACFFDLINMSRMAASKVNLNRIKKPGKLFSKAIKNKTNAGCKPLVKGQFLGEKTELEITKRLDEVELTPKQLVDYSIFKCLGGGEDMMKTMAQLDKNNKMEDYGYNFFAEEISPPVLLRCMEGEWLDKFPFMRSIIDRIKDVALSHALPRKRIFCYINPRIMACECNIYETVRSRCLLGVKISLVNTMLKVMKRSQTKTILNQVSSICKEHGIAYEICNIHINKTMKEDKKIIKERLARKRSHPN</sequence>
<organismHost>
    <name type="scientific">Magallana gigas</name>
    <name type="common">Pacific oyster</name>
    <name type="synonym">Crassostrea gigas</name>
    <dbReference type="NCBI Taxonomy" id="29159"/>
</organismHost>
<organismHost>
    <name type="scientific">Pecten maximus</name>
    <name type="common">King scallop</name>
    <name type="synonym">Pilgrim's clam</name>
    <dbReference type="NCBI Taxonomy" id="6579"/>
</organismHost>
<proteinExistence type="predicted"/>
<protein>
    <recommendedName>
        <fullName>Uncharacterized protein ORF114</fullName>
    </recommendedName>
</protein>
<keyword id="KW-1185">Reference proteome</keyword>
<accession>Q6R7B6</accession>
<organism>
    <name type="scientific">Ostreid herpesvirus 1 (isolate France)</name>
    <name type="common">OsHV-1</name>
    <name type="synonym">Pacific oyster herpesvirus</name>
    <dbReference type="NCBI Taxonomy" id="654903"/>
    <lineage>
        <taxon>Viruses</taxon>
        <taxon>Duplodnaviria</taxon>
        <taxon>Heunggongvirae</taxon>
        <taxon>Peploviricota</taxon>
        <taxon>Herviviricetes</taxon>
        <taxon>Herpesvirales</taxon>
        <taxon>Malacoherpesviridae</taxon>
        <taxon>Ostreavirus</taxon>
        <taxon>Ostreavirus ostreidmalaco1</taxon>
        <taxon>Ostreid herpesvirus 1</taxon>
    </lineage>
</organism>
<feature type="chain" id="PRO_0000385128" description="Uncharacterized protein ORF114">
    <location>
        <begin position="1"/>
        <end position="494"/>
    </location>
</feature>
<dbReference type="EMBL" id="AY509253">
    <property type="protein sequence ID" value="AAS00999.1"/>
    <property type="molecule type" value="Genomic_DNA"/>
</dbReference>
<dbReference type="RefSeq" id="YP_024652.1">
    <property type="nucleotide sequence ID" value="NC_005881.2"/>
</dbReference>
<dbReference type="KEGG" id="vg:2948163"/>
<dbReference type="Proteomes" id="UP000007021">
    <property type="component" value="Segment"/>
</dbReference>
<gene>
    <name type="ORF">ORF114</name>
</gene>
<name>Y114_OSHVF</name>